<keyword id="KW-1185">Reference proteome</keyword>
<organism>
    <name type="scientific">Homo sapiens</name>
    <name type="common">Human</name>
    <dbReference type="NCBI Taxonomy" id="9606"/>
    <lineage>
        <taxon>Eukaryota</taxon>
        <taxon>Metazoa</taxon>
        <taxon>Chordata</taxon>
        <taxon>Craniata</taxon>
        <taxon>Vertebrata</taxon>
        <taxon>Euteleostomi</taxon>
        <taxon>Mammalia</taxon>
        <taxon>Eutheria</taxon>
        <taxon>Euarchontoglires</taxon>
        <taxon>Primates</taxon>
        <taxon>Haplorrhini</taxon>
        <taxon>Catarrhini</taxon>
        <taxon>Hominidae</taxon>
        <taxon>Homo</taxon>
    </lineage>
</organism>
<name>CM042_HUMAN</name>
<sequence>MFRKIHSIFNSSPQRKTAAESPFYEGASPAVKLIRSSSMYVVGDHGEKFSESLKKYKSTSSMDTSLYYLRQEEDRAWMYSRTQDCLQYLQELLALRKKYLSSFSDLKPHRTQGISSTSSKSSKGGKKTPVRSTPKEIKKATPKKYSQFSADVAEAIAFFDSIIAELDTERRPRAAEASLPNEDVDFDVATSSREHSLHSNWILRAPRRHSEDIAAHTVHTVDGQFRRSTEHRTVGTQRRLERHPIYLPKAVEGAFNTWKFKPKACKKDLGSSRQILFNFSGEDMEWDAELFALEPQLSPGEDYYETENPKGQWLLRERLWERTVP</sequence>
<reference key="1">
    <citation type="journal article" date="2004" name="Nature">
        <title>The DNA sequence and analysis of human chromosome 13.</title>
        <authorList>
            <person name="Dunham A."/>
            <person name="Matthews L.H."/>
            <person name="Burton J."/>
            <person name="Ashurst J.L."/>
            <person name="Howe K.L."/>
            <person name="Ashcroft K.J."/>
            <person name="Beare D.M."/>
            <person name="Burford D.C."/>
            <person name="Hunt S.E."/>
            <person name="Griffiths-Jones S."/>
            <person name="Jones M.C."/>
            <person name="Keenan S.J."/>
            <person name="Oliver K."/>
            <person name="Scott C.E."/>
            <person name="Ainscough R."/>
            <person name="Almeida J.P."/>
            <person name="Ambrose K.D."/>
            <person name="Andrews D.T."/>
            <person name="Ashwell R.I.S."/>
            <person name="Babbage A.K."/>
            <person name="Bagguley C.L."/>
            <person name="Bailey J."/>
            <person name="Bannerjee R."/>
            <person name="Barlow K.F."/>
            <person name="Bates K."/>
            <person name="Beasley H."/>
            <person name="Bird C.P."/>
            <person name="Bray-Allen S."/>
            <person name="Brown A.J."/>
            <person name="Brown J.Y."/>
            <person name="Burrill W."/>
            <person name="Carder C."/>
            <person name="Carter N.P."/>
            <person name="Chapman J.C."/>
            <person name="Clamp M.E."/>
            <person name="Clark S.Y."/>
            <person name="Clarke G."/>
            <person name="Clee C.M."/>
            <person name="Clegg S.C."/>
            <person name="Cobley V."/>
            <person name="Collins J.E."/>
            <person name="Corby N."/>
            <person name="Coville G.J."/>
            <person name="Deloukas P."/>
            <person name="Dhami P."/>
            <person name="Dunham I."/>
            <person name="Dunn M."/>
            <person name="Earthrowl M.E."/>
            <person name="Ellington A.G."/>
            <person name="Faulkner L."/>
            <person name="Frankish A.G."/>
            <person name="Frankland J."/>
            <person name="French L."/>
            <person name="Garner P."/>
            <person name="Garnett J."/>
            <person name="Gilbert J.G.R."/>
            <person name="Gilson C.J."/>
            <person name="Ghori J."/>
            <person name="Grafham D.V."/>
            <person name="Gribble S.M."/>
            <person name="Griffiths C."/>
            <person name="Hall R.E."/>
            <person name="Hammond S."/>
            <person name="Harley J.L."/>
            <person name="Hart E.A."/>
            <person name="Heath P.D."/>
            <person name="Howden P.J."/>
            <person name="Huckle E.J."/>
            <person name="Hunt P.J."/>
            <person name="Hunt A.R."/>
            <person name="Johnson C."/>
            <person name="Johnson D."/>
            <person name="Kay M."/>
            <person name="Kimberley A.M."/>
            <person name="King A."/>
            <person name="Laird G.K."/>
            <person name="Langford C.J."/>
            <person name="Lawlor S."/>
            <person name="Leongamornlert D.A."/>
            <person name="Lloyd D.M."/>
            <person name="Lloyd C."/>
            <person name="Loveland J.E."/>
            <person name="Lovell J."/>
            <person name="Martin S."/>
            <person name="Mashreghi-Mohammadi M."/>
            <person name="McLaren S.J."/>
            <person name="McMurray A."/>
            <person name="Milne S."/>
            <person name="Moore M.J.F."/>
            <person name="Nickerson T."/>
            <person name="Palmer S.A."/>
            <person name="Pearce A.V."/>
            <person name="Peck A.I."/>
            <person name="Pelan S."/>
            <person name="Phillimore B."/>
            <person name="Porter K.M."/>
            <person name="Rice C.M."/>
            <person name="Searle S."/>
            <person name="Sehra H.K."/>
            <person name="Shownkeen R."/>
            <person name="Skuce C.D."/>
            <person name="Smith M."/>
            <person name="Steward C.A."/>
            <person name="Sycamore N."/>
            <person name="Tester J."/>
            <person name="Thomas D.W."/>
            <person name="Tracey A."/>
            <person name="Tromans A."/>
            <person name="Tubby B."/>
            <person name="Wall M."/>
            <person name="Wallis J.M."/>
            <person name="West A.P."/>
            <person name="Whitehead S.L."/>
            <person name="Willey D.L."/>
            <person name="Wilming L."/>
            <person name="Wray P.W."/>
            <person name="Wright M.W."/>
            <person name="Young L."/>
            <person name="Coulson A."/>
            <person name="Durbin R.M."/>
            <person name="Hubbard T."/>
            <person name="Sulston J.E."/>
            <person name="Beck S."/>
            <person name="Bentley D.R."/>
            <person name="Rogers J."/>
            <person name="Ross M.T."/>
        </authorList>
    </citation>
    <scope>NUCLEOTIDE SEQUENCE [LARGE SCALE GENOMIC DNA]</scope>
</reference>
<proteinExistence type="predicted"/>
<evidence type="ECO:0000256" key="1">
    <source>
        <dbReference type="SAM" id="MobiDB-lite"/>
    </source>
</evidence>
<evidence type="ECO:0000305" key="2"/>
<evidence type="ECO:0000312" key="3">
    <source>
        <dbReference type="HGNC" id="HGNC:42693"/>
    </source>
</evidence>
<gene>
    <name evidence="3" type="primary">C13orf42</name>
</gene>
<accession>A0A1B0GVH6</accession>
<protein>
    <recommendedName>
        <fullName evidence="2">Uncharacterized protein C13orf42</fullName>
    </recommendedName>
</protein>
<feature type="chain" id="PRO_0000442946" description="Uncharacterized protein C13orf42">
    <location>
        <begin position="1"/>
        <end position="325"/>
    </location>
</feature>
<feature type="region of interest" description="Disordered" evidence="1">
    <location>
        <begin position="108"/>
        <end position="141"/>
    </location>
</feature>
<dbReference type="EMBL" id="AL157817">
    <property type="status" value="NOT_ANNOTATED_CDS"/>
    <property type="molecule type" value="Genomic_DNA"/>
</dbReference>
<dbReference type="EMBL" id="AL160157">
    <property type="status" value="NOT_ANNOTATED_CDS"/>
    <property type="molecule type" value="Genomic_DNA"/>
</dbReference>
<dbReference type="EMBL" id="AL583782">
    <property type="status" value="NOT_ANNOTATED_CDS"/>
    <property type="molecule type" value="Genomic_DNA"/>
</dbReference>
<dbReference type="CCDS" id="CCDS86352.1"/>
<dbReference type="RefSeq" id="NP_001338518.1">
    <property type="nucleotide sequence ID" value="NM_001351589.3"/>
</dbReference>
<dbReference type="SMR" id="A0A1B0GVH6"/>
<dbReference type="BioMuta" id="C13orf42"/>
<dbReference type="Ensembl" id="ENST00000563710.7">
    <property type="protein sequence ID" value="ENSP00000490517.1"/>
    <property type="gene ID" value="ENSG00000226792.8"/>
</dbReference>
<dbReference type="GeneID" id="647166"/>
<dbReference type="MANE-Select" id="ENST00000563710.7">
    <property type="protein sequence ID" value="ENSP00000490517.1"/>
    <property type="RefSeq nucleotide sequence ID" value="NM_001351589.3"/>
    <property type="RefSeq protein sequence ID" value="NP_001338518.1"/>
</dbReference>
<dbReference type="AGR" id="HGNC:42693"/>
<dbReference type="GeneCards" id="C13orf42"/>
<dbReference type="HGNC" id="HGNC:42693">
    <property type="gene designation" value="C13orf42"/>
</dbReference>
<dbReference type="HPA" id="ENSG00000226792">
    <property type="expression patterns" value="Not detected"/>
</dbReference>
<dbReference type="neXtProt" id="NX_A0A1B0GVH6"/>
<dbReference type="OpenTargets" id="ENSG00000226792"/>
<dbReference type="VEuPathDB" id="HostDB:ENSG00000226792"/>
<dbReference type="GeneTree" id="ENSGT00390000003838"/>
<dbReference type="InParanoid" id="A0A1B0GVH6"/>
<dbReference type="OMA" id="YSRTQDC"/>
<dbReference type="OrthoDB" id="8784811at2759"/>
<dbReference type="PAN-GO" id="A0A1B0GVH6">
    <property type="GO annotations" value="0 GO annotations based on evolutionary models"/>
</dbReference>
<dbReference type="Pharos" id="A0A1B0GVH6">
    <property type="development level" value="Tdark"/>
</dbReference>
<dbReference type="PRO" id="PR:A0A1B0GVH6"/>
<dbReference type="Proteomes" id="UP000005640">
    <property type="component" value="Chromosome 13"/>
</dbReference>
<dbReference type="RNAct" id="A0A1B0GVH6">
    <property type="molecule type" value="protein"/>
</dbReference>
<dbReference type="Bgee" id="ENSG00000226792">
    <property type="expression patterns" value="Expressed in primordial germ cell in gonad and 38 other cell types or tissues"/>
</dbReference>